<evidence type="ECO:0000250" key="1">
    <source>
        <dbReference type="UniProtKB" id="O60260"/>
    </source>
</evidence>
<evidence type="ECO:0000250" key="2">
    <source>
        <dbReference type="UniProtKB" id="Q6ZMZ0"/>
    </source>
</evidence>
<evidence type="ECO:0000255" key="3"/>
<evidence type="ECO:0000255" key="4">
    <source>
        <dbReference type="PROSITE-ProRule" id="PRU01221"/>
    </source>
</evidence>
<evidence type="ECO:0000256" key="5">
    <source>
        <dbReference type="SAM" id="MobiDB-lite"/>
    </source>
</evidence>
<evidence type="ECO:0000305" key="6"/>
<dbReference type="EC" id="2.3.2.31" evidence="1"/>
<dbReference type="EMBL" id="CR753876">
    <property type="protein sequence ID" value="CAK11317.1"/>
    <property type="status" value="ALT_INIT"/>
    <property type="molecule type" value="Genomic_DNA"/>
</dbReference>
<dbReference type="RefSeq" id="NP_001189369.1">
    <property type="nucleotide sequence ID" value="NM_001202440.1"/>
</dbReference>
<dbReference type="RefSeq" id="XP_005159717.1">
    <property type="nucleotide sequence ID" value="XM_005159660.5"/>
</dbReference>
<dbReference type="FunCoup" id="Q1L8L6">
    <property type="interactions" value="419"/>
</dbReference>
<dbReference type="STRING" id="7955.ENSDARP00000116147"/>
<dbReference type="PaxDb" id="7955-ENSDARP00000116147"/>
<dbReference type="GeneID" id="562396"/>
<dbReference type="KEGG" id="dre:562396"/>
<dbReference type="AGR" id="ZFIN:ZDB-GENE-060503-281"/>
<dbReference type="CTD" id="127544"/>
<dbReference type="ZFIN" id="ZDB-GENE-060503-281">
    <property type="gene designation" value="rnf19b"/>
</dbReference>
<dbReference type="eggNOG" id="KOG1815">
    <property type="taxonomic scope" value="Eukaryota"/>
</dbReference>
<dbReference type="InParanoid" id="Q1L8L6"/>
<dbReference type="OMA" id="EQEQTCK"/>
<dbReference type="OrthoDB" id="1431934at2759"/>
<dbReference type="PhylomeDB" id="Q1L8L6"/>
<dbReference type="TreeFam" id="TF324777"/>
<dbReference type="Reactome" id="R-DRE-983168">
    <property type="pathway name" value="Antigen processing: Ubiquitination &amp; Proteasome degradation"/>
</dbReference>
<dbReference type="UniPathway" id="UPA00143"/>
<dbReference type="PRO" id="PR:Q1L8L6"/>
<dbReference type="Proteomes" id="UP000000437">
    <property type="component" value="Chromosome 19"/>
</dbReference>
<dbReference type="GO" id="GO:0005737">
    <property type="term" value="C:cytoplasm"/>
    <property type="evidence" value="ECO:0000318"/>
    <property type="project" value="GO_Central"/>
</dbReference>
<dbReference type="GO" id="GO:0005789">
    <property type="term" value="C:endoplasmic reticulum membrane"/>
    <property type="evidence" value="ECO:0007669"/>
    <property type="project" value="UniProtKB-SubCell"/>
</dbReference>
<dbReference type="GO" id="GO:0000151">
    <property type="term" value="C:ubiquitin ligase complex"/>
    <property type="evidence" value="ECO:0000318"/>
    <property type="project" value="GO_Central"/>
</dbReference>
<dbReference type="GO" id="GO:0031624">
    <property type="term" value="F:ubiquitin conjugating enzyme binding"/>
    <property type="evidence" value="ECO:0000318"/>
    <property type="project" value="GO_Central"/>
</dbReference>
<dbReference type="GO" id="GO:0061630">
    <property type="term" value="F:ubiquitin protein ligase activity"/>
    <property type="evidence" value="ECO:0000318"/>
    <property type="project" value="GO_Central"/>
</dbReference>
<dbReference type="GO" id="GO:0008270">
    <property type="term" value="F:zinc ion binding"/>
    <property type="evidence" value="ECO:0007669"/>
    <property type="project" value="UniProtKB-KW"/>
</dbReference>
<dbReference type="GO" id="GO:0016567">
    <property type="term" value="P:protein ubiquitination"/>
    <property type="evidence" value="ECO:0007669"/>
    <property type="project" value="UniProtKB-UniPathway"/>
</dbReference>
<dbReference type="GO" id="GO:0006511">
    <property type="term" value="P:ubiquitin-dependent protein catabolic process"/>
    <property type="evidence" value="ECO:0000318"/>
    <property type="project" value="GO_Central"/>
</dbReference>
<dbReference type="CDD" id="cd20355">
    <property type="entry name" value="Rcat_RBR_RNF19"/>
    <property type="match status" value="1"/>
</dbReference>
<dbReference type="CDD" id="cd16776">
    <property type="entry name" value="RING-HC_RBR_RNF19B"/>
    <property type="match status" value="1"/>
</dbReference>
<dbReference type="FunFam" id="1.20.120.1750:FF:000001">
    <property type="entry name" value="RBR-type E3 ubiquitin transferase"/>
    <property type="match status" value="1"/>
</dbReference>
<dbReference type="FunFam" id="2.20.25.20:FF:000004">
    <property type="entry name" value="RBR-type E3 ubiquitin transferase"/>
    <property type="match status" value="1"/>
</dbReference>
<dbReference type="FunFam" id="3.30.40.10:FF:000052">
    <property type="entry name" value="RBR-type E3 ubiquitin transferase"/>
    <property type="match status" value="1"/>
</dbReference>
<dbReference type="Gene3D" id="1.20.120.1750">
    <property type="match status" value="1"/>
</dbReference>
<dbReference type="Gene3D" id="2.20.25.20">
    <property type="match status" value="1"/>
</dbReference>
<dbReference type="Gene3D" id="3.30.40.10">
    <property type="entry name" value="Zinc/RING finger domain, C3HC4 (zinc finger)"/>
    <property type="match status" value="1"/>
</dbReference>
<dbReference type="InterPro" id="IPR031127">
    <property type="entry name" value="E3_UB_ligase_RBR"/>
</dbReference>
<dbReference type="InterPro" id="IPR002867">
    <property type="entry name" value="IBR_dom"/>
</dbReference>
<dbReference type="InterPro" id="IPR044066">
    <property type="entry name" value="TRIAD_supradom"/>
</dbReference>
<dbReference type="InterPro" id="IPR001841">
    <property type="entry name" value="Znf_RING"/>
</dbReference>
<dbReference type="InterPro" id="IPR013083">
    <property type="entry name" value="Znf_RING/FYVE/PHD"/>
</dbReference>
<dbReference type="PANTHER" id="PTHR11685">
    <property type="entry name" value="RBR FAMILY RING FINGER AND IBR DOMAIN-CONTAINING"/>
    <property type="match status" value="1"/>
</dbReference>
<dbReference type="Pfam" id="PF01485">
    <property type="entry name" value="IBR"/>
    <property type="match status" value="2"/>
</dbReference>
<dbReference type="SMART" id="SM00647">
    <property type="entry name" value="IBR"/>
    <property type="match status" value="2"/>
</dbReference>
<dbReference type="SUPFAM" id="SSF57850">
    <property type="entry name" value="RING/U-box"/>
    <property type="match status" value="3"/>
</dbReference>
<dbReference type="PROSITE" id="PS51873">
    <property type="entry name" value="TRIAD"/>
    <property type="match status" value="1"/>
</dbReference>
<dbReference type="PROSITE" id="PS50089">
    <property type="entry name" value="ZF_RING_2"/>
    <property type="match status" value="1"/>
</dbReference>
<comment type="function">
    <text evidence="2">E3 ubiquitin-protein ligase which accepts ubiquitin from E2 ubiquitin-conjugating enzymes UBE2L3 and UBE2L6 in the form of a thioester and then directly transfers the ubiquitin to targeted substrates, such as UCKL1. Involved in the cytolytic activity of natural killer cells and cytotoxic T-cells. Protects against staurosporin-induced cell death.</text>
</comment>
<comment type="catalytic activity">
    <reaction evidence="1">
        <text>[E2 ubiquitin-conjugating enzyme]-S-ubiquitinyl-L-cysteine + [acceptor protein]-L-lysine = [E2 ubiquitin-conjugating enzyme]-L-cysteine + [acceptor protein]-N(6)-ubiquitinyl-L-lysine.</text>
        <dbReference type="EC" id="2.3.2.31"/>
    </reaction>
</comment>
<comment type="pathway">
    <text>Protein modification; protein ubiquitination.</text>
</comment>
<comment type="subunit">
    <text evidence="2">Interacts with UBE2L3, UBE2L6 and UCKL1.</text>
</comment>
<comment type="subcellular location">
    <subcellularLocation>
        <location evidence="2">Cytoplasmic granule membrane</location>
        <topology evidence="2">Multi-pass membrane protein</topology>
    </subcellularLocation>
    <subcellularLocation>
        <location evidence="2">Endoplasmic reticulum membrane</location>
        <topology evidence="2">Multi-pass membrane protein</topology>
    </subcellularLocation>
</comment>
<comment type="domain">
    <text evidence="2">The first IBR-type zinc finger is the most crucial for interaction with UBE2L3, UBE2L6 and UCKL1.</text>
</comment>
<comment type="domain">
    <text evidence="1">Members of the RBR family are atypical E3 ligases. They interact with the E2 conjugating enzyme UBE2L3 and function like HECT-type E3 enzymes: they bind E2s via the first RING domain, but require an obligate trans-thiolation step during the ubiquitin transfer, requiring a conserved cysteine residue in the second RING domain.</text>
</comment>
<comment type="similarity">
    <text evidence="6">Belongs to the RBR family. RNF19 subfamily.</text>
</comment>
<comment type="sequence caution" evidence="6">
    <conflict type="erroneous initiation">
        <sequence resource="EMBL-CDS" id="CAK11317"/>
    </conflict>
</comment>
<name>RN19B_DANRE</name>
<feature type="chain" id="PRO_0000307189" description="E3 ubiquitin-protein ligase RNF19B">
    <location>
        <begin position="1"/>
        <end position="701"/>
    </location>
</feature>
<feature type="transmembrane region" description="Helical" evidence="3">
    <location>
        <begin position="340"/>
        <end position="360"/>
    </location>
</feature>
<feature type="transmembrane region" description="Helical" evidence="3">
    <location>
        <begin position="396"/>
        <end position="416"/>
    </location>
</feature>
<feature type="zinc finger region" description="RING-type 1" evidence="4">
    <location>
        <begin position="107"/>
        <end position="156"/>
    </location>
</feature>
<feature type="zinc finger region" description="IBR-type" evidence="4">
    <location>
        <begin position="174"/>
        <end position="239"/>
    </location>
</feature>
<feature type="zinc finger region" description="RING-type 2; atypical" evidence="4">
    <location>
        <begin position="273"/>
        <end position="304"/>
    </location>
</feature>
<feature type="region of interest" description="Required for ubiquitin ligase activity and for protection against staurosporin-induced cell death" evidence="2">
    <location>
        <begin position="1"/>
        <end position="304"/>
    </location>
</feature>
<feature type="region of interest" description="Disordered" evidence="5">
    <location>
        <begin position="1"/>
        <end position="97"/>
    </location>
</feature>
<feature type="region of interest" description="TRIAD supradomain" evidence="4">
    <location>
        <begin position="103"/>
        <end position="323"/>
    </location>
</feature>
<feature type="region of interest" description="Disordered" evidence="5">
    <location>
        <begin position="472"/>
        <end position="495"/>
    </location>
</feature>
<feature type="region of interest" description="Disordered" evidence="5">
    <location>
        <begin position="658"/>
        <end position="677"/>
    </location>
</feature>
<feature type="compositionally biased region" description="Low complexity" evidence="5">
    <location>
        <begin position="57"/>
        <end position="72"/>
    </location>
</feature>
<feature type="active site" evidence="4">
    <location>
        <position position="288"/>
    </location>
</feature>
<feature type="binding site" evidence="4">
    <location>
        <position position="107"/>
    </location>
    <ligand>
        <name>Zn(2+)</name>
        <dbReference type="ChEBI" id="CHEBI:29105"/>
        <label>1</label>
    </ligand>
</feature>
<feature type="binding site" evidence="4">
    <location>
        <position position="110"/>
    </location>
    <ligand>
        <name>Zn(2+)</name>
        <dbReference type="ChEBI" id="CHEBI:29105"/>
        <label>1</label>
    </ligand>
</feature>
<feature type="binding site" evidence="4">
    <location>
        <position position="130"/>
    </location>
    <ligand>
        <name>Zn(2+)</name>
        <dbReference type="ChEBI" id="CHEBI:29105"/>
        <label>1</label>
    </ligand>
</feature>
<feature type="binding site" evidence="4">
    <location>
        <position position="133"/>
    </location>
    <ligand>
        <name>Zn(2+)</name>
        <dbReference type="ChEBI" id="CHEBI:29105"/>
        <label>1</label>
    </ligand>
</feature>
<feature type="binding site" evidence="4">
    <location>
        <position position="194"/>
    </location>
    <ligand>
        <name>Zn(2+)</name>
        <dbReference type="ChEBI" id="CHEBI:29105"/>
        <label>2</label>
    </ligand>
</feature>
<feature type="binding site" evidence="4">
    <location>
        <position position="199"/>
    </location>
    <ligand>
        <name>Zn(2+)</name>
        <dbReference type="ChEBI" id="CHEBI:29105"/>
        <label>2</label>
    </ligand>
</feature>
<feature type="binding site" evidence="4">
    <location>
        <position position="216"/>
    </location>
    <ligand>
        <name>Zn(2+)</name>
        <dbReference type="ChEBI" id="CHEBI:29105"/>
        <label>2</label>
    </ligand>
</feature>
<feature type="binding site" evidence="4">
    <location>
        <position position="221"/>
    </location>
    <ligand>
        <name>Zn(2+)</name>
        <dbReference type="ChEBI" id="CHEBI:29105"/>
        <label>2</label>
    </ligand>
</feature>
<feature type="binding site" evidence="4">
    <location>
        <position position="226"/>
    </location>
    <ligand>
        <name>Zn(2+)</name>
        <dbReference type="ChEBI" id="CHEBI:29105"/>
        <label>3</label>
    </ligand>
</feature>
<feature type="binding site" evidence="4">
    <location>
        <position position="229"/>
    </location>
    <ligand>
        <name>Zn(2+)</name>
        <dbReference type="ChEBI" id="CHEBI:29105"/>
        <label>3</label>
    </ligand>
</feature>
<feature type="binding site" evidence="4">
    <location>
        <position position="234"/>
    </location>
    <ligand>
        <name>Zn(2+)</name>
        <dbReference type="ChEBI" id="CHEBI:29105"/>
        <label>3</label>
    </ligand>
</feature>
<feature type="binding site" evidence="4">
    <location>
        <position position="239"/>
    </location>
    <ligand>
        <name>Zn(2+)</name>
        <dbReference type="ChEBI" id="CHEBI:29105"/>
        <label>3</label>
    </ligand>
</feature>
<feature type="binding site" evidence="4">
    <location>
        <position position="273"/>
    </location>
    <ligand>
        <name>Zn(2+)</name>
        <dbReference type="ChEBI" id="CHEBI:29105"/>
        <label>4</label>
    </ligand>
</feature>
<feature type="binding site" evidence="4">
    <location>
        <position position="276"/>
    </location>
    <ligand>
        <name>Zn(2+)</name>
        <dbReference type="ChEBI" id="CHEBI:29105"/>
        <label>4</label>
    </ligand>
</feature>
<feature type="binding site" evidence="4">
    <location>
        <position position="293"/>
    </location>
    <ligand>
        <name>Zn(2+)</name>
        <dbReference type="ChEBI" id="CHEBI:29105"/>
        <label>4</label>
    </ligand>
</feature>
<feature type="binding site" evidence="4">
    <location>
        <position position="296"/>
    </location>
    <ligand>
        <name>Zn(2+)</name>
        <dbReference type="ChEBI" id="CHEBI:29105"/>
        <label>4</label>
    </ligand>
</feature>
<feature type="binding site" evidence="4">
    <location>
        <position position="301"/>
    </location>
    <ligand>
        <name>Zn(2+)</name>
        <dbReference type="ChEBI" id="CHEBI:29105"/>
        <label>5</label>
    </ligand>
</feature>
<feature type="binding site" evidence="4">
    <location>
        <position position="304"/>
    </location>
    <ligand>
        <name>Zn(2+)</name>
        <dbReference type="ChEBI" id="CHEBI:29105"/>
        <label>5</label>
    </ligand>
</feature>
<feature type="binding site" evidence="4">
    <location>
        <position position="312"/>
    </location>
    <ligand>
        <name>Zn(2+)</name>
        <dbReference type="ChEBI" id="CHEBI:29105"/>
        <label>5</label>
    </ligand>
</feature>
<feature type="binding site" evidence="4">
    <location>
        <position position="319"/>
    </location>
    <ligand>
        <name>Zn(2+)</name>
        <dbReference type="ChEBI" id="CHEBI:29105"/>
        <label>5</label>
    </ligand>
</feature>
<gene>
    <name type="primary">rnf19b</name>
    <name type="ORF">si:rp71-45k5.9</name>
</gene>
<reference key="1">
    <citation type="journal article" date="2013" name="Nature">
        <title>The zebrafish reference genome sequence and its relationship to the human genome.</title>
        <authorList>
            <person name="Howe K."/>
            <person name="Clark M.D."/>
            <person name="Torroja C.F."/>
            <person name="Torrance J."/>
            <person name="Berthelot C."/>
            <person name="Muffato M."/>
            <person name="Collins J.E."/>
            <person name="Humphray S."/>
            <person name="McLaren K."/>
            <person name="Matthews L."/>
            <person name="McLaren S."/>
            <person name="Sealy I."/>
            <person name="Caccamo M."/>
            <person name="Churcher C."/>
            <person name="Scott C."/>
            <person name="Barrett J.C."/>
            <person name="Koch R."/>
            <person name="Rauch G.J."/>
            <person name="White S."/>
            <person name="Chow W."/>
            <person name="Kilian B."/>
            <person name="Quintais L.T."/>
            <person name="Guerra-Assuncao J.A."/>
            <person name="Zhou Y."/>
            <person name="Gu Y."/>
            <person name="Yen J."/>
            <person name="Vogel J.H."/>
            <person name="Eyre T."/>
            <person name="Redmond S."/>
            <person name="Banerjee R."/>
            <person name="Chi J."/>
            <person name="Fu B."/>
            <person name="Langley E."/>
            <person name="Maguire S.F."/>
            <person name="Laird G.K."/>
            <person name="Lloyd D."/>
            <person name="Kenyon E."/>
            <person name="Donaldson S."/>
            <person name="Sehra H."/>
            <person name="Almeida-King J."/>
            <person name="Loveland J."/>
            <person name="Trevanion S."/>
            <person name="Jones M."/>
            <person name="Quail M."/>
            <person name="Willey D."/>
            <person name="Hunt A."/>
            <person name="Burton J."/>
            <person name="Sims S."/>
            <person name="McLay K."/>
            <person name="Plumb B."/>
            <person name="Davis J."/>
            <person name="Clee C."/>
            <person name="Oliver K."/>
            <person name="Clark R."/>
            <person name="Riddle C."/>
            <person name="Elliot D."/>
            <person name="Threadgold G."/>
            <person name="Harden G."/>
            <person name="Ware D."/>
            <person name="Begum S."/>
            <person name="Mortimore B."/>
            <person name="Kerry G."/>
            <person name="Heath P."/>
            <person name="Phillimore B."/>
            <person name="Tracey A."/>
            <person name="Corby N."/>
            <person name="Dunn M."/>
            <person name="Johnson C."/>
            <person name="Wood J."/>
            <person name="Clark S."/>
            <person name="Pelan S."/>
            <person name="Griffiths G."/>
            <person name="Smith M."/>
            <person name="Glithero R."/>
            <person name="Howden P."/>
            <person name="Barker N."/>
            <person name="Lloyd C."/>
            <person name="Stevens C."/>
            <person name="Harley J."/>
            <person name="Holt K."/>
            <person name="Panagiotidis G."/>
            <person name="Lovell J."/>
            <person name="Beasley H."/>
            <person name="Henderson C."/>
            <person name="Gordon D."/>
            <person name="Auger K."/>
            <person name="Wright D."/>
            <person name="Collins J."/>
            <person name="Raisen C."/>
            <person name="Dyer L."/>
            <person name="Leung K."/>
            <person name="Robertson L."/>
            <person name="Ambridge K."/>
            <person name="Leongamornlert D."/>
            <person name="McGuire S."/>
            <person name="Gilderthorp R."/>
            <person name="Griffiths C."/>
            <person name="Manthravadi D."/>
            <person name="Nichol S."/>
            <person name="Barker G."/>
            <person name="Whitehead S."/>
            <person name="Kay M."/>
            <person name="Brown J."/>
            <person name="Murnane C."/>
            <person name="Gray E."/>
            <person name="Humphries M."/>
            <person name="Sycamore N."/>
            <person name="Barker D."/>
            <person name="Saunders D."/>
            <person name="Wallis J."/>
            <person name="Babbage A."/>
            <person name="Hammond S."/>
            <person name="Mashreghi-Mohammadi M."/>
            <person name="Barr L."/>
            <person name="Martin S."/>
            <person name="Wray P."/>
            <person name="Ellington A."/>
            <person name="Matthews N."/>
            <person name="Ellwood M."/>
            <person name="Woodmansey R."/>
            <person name="Clark G."/>
            <person name="Cooper J."/>
            <person name="Tromans A."/>
            <person name="Grafham D."/>
            <person name="Skuce C."/>
            <person name="Pandian R."/>
            <person name="Andrews R."/>
            <person name="Harrison E."/>
            <person name="Kimberley A."/>
            <person name="Garnett J."/>
            <person name="Fosker N."/>
            <person name="Hall R."/>
            <person name="Garner P."/>
            <person name="Kelly D."/>
            <person name="Bird C."/>
            <person name="Palmer S."/>
            <person name="Gehring I."/>
            <person name="Berger A."/>
            <person name="Dooley C.M."/>
            <person name="Ersan-Urun Z."/>
            <person name="Eser C."/>
            <person name="Geiger H."/>
            <person name="Geisler M."/>
            <person name="Karotki L."/>
            <person name="Kirn A."/>
            <person name="Konantz J."/>
            <person name="Konantz M."/>
            <person name="Oberlander M."/>
            <person name="Rudolph-Geiger S."/>
            <person name="Teucke M."/>
            <person name="Lanz C."/>
            <person name="Raddatz G."/>
            <person name="Osoegawa K."/>
            <person name="Zhu B."/>
            <person name="Rapp A."/>
            <person name="Widaa S."/>
            <person name="Langford C."/>
            <person name="Yang F."/>
            <person name="Schuster S.C."/>
            <person name="Carter N.P."/>
            <person name="Harrow J."/>
            <person name="Ning Z."/>
            <person name="Herrero J."/>
            <person name="Searle S.M."/>
            <person name="Enright A."/>
            <person name="Geisler R."/>
            <person name="Plasterk R.H."/>
            <person name="Lee C."/>
            <person name="Westerfield M."/>
            <person name="de Jong P.J."/>
            <person name="Zon L.I."/>
            <person name="Postlethwait J.H."/>
            <person name="Nusslein-Volhard C."/>
            <person name="Hubbard T.J."/>
            <person name="Roest Crollius H."/>
            <person name="Rogers J."/>
            <person name="Stemple D.L."/>
        </authorList>
    </citation>
    <scope>NUCLEOTIDE SEQUENCE [LARGE SCALE GENOMIC DNA]</scope>
    <source>
        <strain>Tuebingen</strain>
    </source>
</reference>
<keyword id="KW-0256">Endoplasmic reticulum</keyword>
<keyword id="KW-0472">Membrane</keyword>
<keyword id="KW-0479">Metal-binding</keyword>
<keyword id="KW-1185">Reference proteome</keyword>
<keyword id="KW-0677">Repeat</keyword>
<keyword id="KW-0808">Transferase</keyword>
<keyword id="KW-0812">Transmembrane</keyword>
<keyword id="KW-1133">Transmembrane helix</keyword>
<keyword id="KW-0833">Ubl conjugation pathway</keyword>
<keyword id="KW-0862">Zinc</keyword>
<keyword id="KW-0863">Zinc-finger</keyword>
<protein>
    <recommendedName>
        <fullName>E3 ubiquitin-protein ligase RNF19B</fullName>
        <ecNumber evidence="1">2.3.2.31</ecNumber>
    </recommendedName>
    <alternativeName>
        <fullName>RING finger protein 19B</fullName>
    </alternativeName>
</protein>
<accession>Q1L8L6</accession>
<organism>
    <name type="scientific">Danio rerio</name>
    <name type="common">Zebrafish</name>
    <name type="synonym">Brachydanio rerio</name>
    <dbReference type="NCBI Taxonomy" id="7955"/>
    <lineage>
        <taxon>Eukaryota</taxon>
        <taxon>Metazoa</taxon>
        <taxon>Chordata</taxon>
        <taxon>Craniata</taxon>
        <taxon>Vertebrata</taxon>
        <taxon>Euteleostomi</taxon>
        <taxon>Actinopterygii</taxon>
        <taxon>Neopterygii</taxon>
        <taxon>Teleostei</taxon>
        <taxon>Ostariophysi</taxon>
        <taxon>Cypriniformes</taxon>
        <taxon>Danionidae</taxon>
        <taxon>Danioninae</taxon>
        <taxon>Danio</taxon>
    </lineage>
</organism>
<proteinExistence type="inferred from homology"/>
<sequence>MGSEKDSESPHSSVSGIPNPKCRGPGKKQGRISFHSLFHSKRGPRGSKANVGTPLAQQLHQQQQIQQQQLLQPPTPTNVSSDPSTADPAEPLSTSQASLGGQELLECPLCLVRQPAEQLPELQGCSHRSCLCCLRQYLRIEITESRVQLSCPECAERLAPWQVALILDDPNLMEKYEEFLLRRCLASDPDCRWCPAPDCGFAVIASGCASCPRLVCRREGCGAEFCYHCKQAWHPNQTCDSARQQRALSLRTHSNHSPSYTAEQGHTDDIKPCPRCGAYIIKMNDGSCNHMTCAVCGCEFCWLCMKEISDLHYLSPSGCTFWGKKPWSRKKKILWQLGTLIGAPVGITLIAGIAVPAMVIGIPVYIGRKIHSHYEGKKTSHHRRNLAITGGVALSIITAPVIAAVSVGIGVPIMLAYVYGVVPISLCRGGGCGVSRGKGRGVRIDFDEDDGPITVADAWRALKSPSLGESSLEGAASGLSTTSPSEGLSVAPGGLGDTPHFNTLAGGALGARTGKYSRLEVQGTELGKEVAGRETGSLGAASDCASTRGMAGSITSSYTLPDREGTNLEIQVDIETKPSHLCLTTEEDLAPPTAAMAPGVGEEPQDCSSRRSRTVMDSPLGLSPGMSLREGLRDVTLAQPESIRSDLEMSDTQSDDIAELTSDDCDSPHPKSCHGAPPQATCRALNPTDSLHCPDNVILYV</sequence>